<keyword id="KW-0067">ATP-binding</keyword>
<keyword id="KW-1035">Host cytoplasm</keyword>
<keyword id="KW-0378">Hydrolase</keyword>
<keyword id="KW-0460">Magnesium</keyword>
<keyword id="KW-0479">Metal-binding</keyword>
<keyword id="KW-0547">Nucleotide-binding</keyword>
<keyword id="KW-1185">Reference proteome</keyword>
<keyword id="KW-0694">RNA-binding</keyword>
<protein>
    <recommendedName>
        <fullName evidence="1">Non-structural protein 2</fullName>
        <shortName evidence="1">NSP2</shortName>
        <ecNumber evidence="1">3.6.4.-</ecNumber>
    </recommendedName>
    <alternativeName>
        <fullName evidence="1">NCVP3</fullName>
    </alternativeName>
    <alternativeName>
        <fullName evidence="1">Non-structural RNA-binding protein 35</fullName>
        <shortName evidence="1">NS35</shortName>
    </alternativeName>
</protein>
<dbReference type="EC" id="3.6.4.-" evidence="1"/>
<dbReference type="EMBL" id="DQ113903">
    <property type="protein sequence ID" value="AAZ03491.1"/>
    <property type="molecule type" value="Genomic_RNA"/>
</dbReference>
<dbReference type="RefSeq" id="YP_392496.1">
    <property type="nucleotide sequence ID" value="NC_007554.1"/>
</dbReference>
<dbReference type="SMR" id="Q45UF4"/>
<dbReference type="GeneID" id="5076656"/>
<dbReference type="KEGG" id="vg:5076656"/>
<dbReference type="OrthoDB" id="14946at10239"/>
<dbReference type="Proteomes" id="UP000007663">
    <property type="component" value="Genome"/>
</dbReference>
<dbReference type="GO" id="GO:0030430">
    <property type="term" value="C:host cell cytoplasm"/>
    <property type="evidence" value="ECO:0007669"/>
    <property type="project" value="UniProtKB-SubCell"/>
</dbReference>
<dbReference type="GO" id="GO:0005524">
    <property type="term" value="F:ATP binding"/>
    <property type="evidence" value="ECO:0007669"/>
    <property type="project" value="UniProtKB-KW"/>
</dbReference>
<dbReference type="GO" id="GO:0016817">
    <property type="term" value="F:hydrolase activity, acting on acid anhydrides"/>
    <property type="evidence" value="ECO:0007669"/>
    <property type="project" value="UniProtKB-UniRule"/>
</dbReference>
<dbReference type="GO" id="GO:0046872">
    <property type="term" value="F:metal ion binding"/>
    <property type="evidence" value="ECO:0007669"/>
    <property type="project" value="UniProtKB-UniRule"/>
</dbReference>
<dbReference type="GO" id="GO:0003723">
    <property type="term" value="F:RNA binding"/>
    <property type="evidence" value="ECO:0007669"/>
    <property type="project" value="UniProtKB-UniRule"/>
</dbReference>
<dbReference type="GO" id="GO:0019079">
    <property type="term" value="P:viral genome replication"/>
    <property type="evidence" value="ECO:0007669"/>
    <property type="project" value="UniProtKB-UniRule"/>
</dbReference>
<dbReference type="HAMAP" id="MF_04089">
    <property type="entry name" value="ROTA_NSP2"/>
    <property type="match status" value="1"/>
</dbReference>
<dbReference type="InterPro" id="IPR003668">
    <property type="entry name" value="Rotavirus_NSP2"/>
</dbReference>
<organismHost>
    <name type="scientific">Homo sapiens</name>
    <name type="common">Human</name>
    <dbReference type="NCBI Taxonomy" id="9606"/>
</organismHost>
<name>NSP2_ROTJ1</name>
<reference key="1">
    <citation type="journal article" date="2008" name="J. Gen. Virol.">
        <title>Molecular characterization of a novel adult diarrhoea rotavirus strain J19 isolated in China and its significance for the evolution and origin of group B rotaviruses.</title>
        <authorList>
            <person name="Jiang S."/>
            <person name="Ji S."/>
            <person name="Tang Q."/>
            <person name="Cui X."/>
            <person name="Yang H."/>
            <person name="Kan B."/>
            <person name="Gao S."/>
        </authorList>
    </citation>
    <scope>NUCLEOTIDE SEQUENCE [GENOMIC RNA]</scope>
</reference>
<comment type="function">
    <text evidence="1">Participates in replication and packaging of the viral genome. Plays a crucial role, together with NSP5, in the formation of virus factories (viroplasms) which are large inclusions in the host cytoplasm where replication intermediates are assembled and viral RNA replication takes place. Displays ssRNA binding, NTPase, RNA triphosphatase (RTPase) and ATP-independent helix-unwinding activities. The unwinding activity may prepare and organize plus-strand RNAs for packaging and replication by removing interfering secondary structures. The RTPase activity plays a role in the removal of the gamma-phosphate from the rotavirus RNA minus strands of dsRNA genome segments.</text>
</comment>
<comment type="cofactor">
    <cofactor evidence="1">
        <name>Mg(2+)</name>
        <dbReference type="ChEBI" id="CHEBI:18420"/>
    </cofactor>
</comment>
<comment type="subunit">
    <text evidence="1">Homooctamer. Interacts with VP1; this interaction is weak. Interacts with NSP5; this interaction leads to up-regulation of NSP5 phosphorylation and formation of viral factories.</text>
</comment>
<comment type="subcellular location">
    <subcellularLocation>
        <location evidence="1">Host cytoplasm</location>
    </subcellularLocation>
    <text evidence="1">Found in spherical cytoplasmic structures, called viral factories, that appear early after infection and are the site of viral replication and packaging.</text>
</comment>
<comment type="similarity">
    <text evidence="1">Belongs to the rotavirus NSP2 family.</text>
</comment>
<proteinExistence type="inferred from homology"/>
<organism>
    <name type="scientific">Rotavirus X (strain RVX/Human/China/NADRV-J19/1997/GXP[X])</name>
    <name type="common">RV ADRV-N</name>
    <name type="synonym">Rotavirus (isolate novel adult diarrhea rotavirus-J19)</name>
    <dbReference type="NCBI Taxonomy" id="335103"/>
    <lineage>
        <taxon>Viruses</taxon>
        <taxon>Riboviria</taxon>
        <taxon>Orthornavirae</taxon>
        <taxon>Duplornaviricota</taxon>
        <taxon>Resentoviricetes</taxon>
        <taxon>Reovirales</taxon>
        <taxon>Sedoreoviridae</taxon>
        <taxon>Rotavirus</taxon>
        <taxon>Rotavirus H</taxon>
    </lineage>
</organism>
<evidence type="ECO:0000255" key="1">
    <source>
        <dbReference type="HAMAP-Rule" id="MF_04089"/>
    </source>
</evidence>
<accession>Q45UF4</accession>
<sequence length="297" mass="33433">MVSIKVSLADFIVKTEEGWIPSDNCPALDRFKTKTEKELLDSIKKEGADRASIRKQLFLTSISNKRLTQLGGVPVRDIRTSTTIPSSTRNLITDWLLNIFNDEESGEEVESAIASKYPDIFCSADKISRVAQRLENRRDRVHEDGFRILSATMLAIDSDIATEGKCEIVRATEDAIIAKFEPVSEHLCIGNPRGVFYKAFPIKKEQPMVYGVKALLGISNRDFIMNHGHGHLRTVPYSEINNAVRSFAKKNEAEIKRIRSDSLSPNAGEKFINMCDMLLQKEKIETVIAKIMKSDKN</sequence>
<feature type="chain" id="PRO_0000369853" description="Non-structural protein 2">
    <location>
        <begin position="1"/>
        <end position="297"/>
    </location>
</feature>
<feature type="region of interest" description="RNA-binding" evidence="1">
    <location>
        <begin position="212"/>
        <end position="247"/>
    </location>
</feature>
<feature type="active site" description="For NTPase and RTPase activities" evidence="1">
    <location>
        <position position="231"/>
    </location>
</feature>
<feature type="binding site" evidence="1">
    <location>
        <begin position="119"/>
        <end position="121"/>
    </location>
    <ligand>
        <name>ATP</name>
        <dbReference type="ChEBI" id="CHEBI:30616"/>
    </ligand>
</feature>
<feature type="binding site" evidence="1">
    <location>
        <position position="198"/>
    </location>
    <ligand>
        <name>ATP</name>
        <dbReference type="ChEBI" id="CHEBI:30616"/>
    </ligand>
</feature>
<feature type="binding site" evidence="1">
    <location>
        <begin position="227"/>
        <end position="229"/>
    </location>
    <ligand>
        <name>ATP</name>
        <dbReference type="ChEBI" id="CHEBI:30616"/>
    </ligand>
</feature>
<feature type="binding site" evidence="1">
    <location>
        <position position="233"/>
    </location>
    <ligand>
        <name>ATP</name>
        <dbReference type="ChEBI" id="CHEBI:30616"/>
    </ligand>
</feature>